<evidence type="ECO:0000255" key="1">
    <source>
        <dbReference type="HAMAP-Rule" id="MF_01587"/>
    </source>
</evidence>
<evidence type="ECO:0000305" key="2"/>
<sequence>MKVWMAILISILCWQSSAWAVCPAWSPARAQEEISRLQQQIKQWDDDYWKEGKSEVEDGVYDQLSARLTQWQRCFGNETRDVMMPPLNGAVMHPVAHTGVRKMADKNALSLWMRERSDLWVQPKVDGVAVTLVYRDGKLNKAISRGNGLKGEDWTQKVRLISAVPQTVSGPLANSTLQGEIFLKRKGHIQQQMGGINARAKVAGLMMRQGNSDTLNSLAVFVWAWPDGPHLMTDRLKDLATAGFTLTQTYTRAVKNADEVAHVRNEWWKAKLPFVTDGVVVRAAKEPESRHWLPGQAEWLVAWKYQPVAQVAEVKAIQFAVGKSGKISVVASLAPVMLDDKKIQRVNIGSVRRWQEWDIAPGDQILVSLAGQGIPRIDDVVWRGAERTKPTPPENRFNSLTCYFASDVCQEQFISRLVWLGSKQVLGLDGIGEAGWRALHQTHRFEHIFSWLLLTPEQLQNTPGIAKSKSAQLWHQFNLARQQPFTRWVMAMGIPLTRAALNASDERSWSQLLFSTEQFWQQLPGTGSGRARQVIEWKENAQIKKLGSWLSAQQITGFEP</sequence>
<proteinExistence type="inferred from homology"/>
<gene>
    <name evidence="1" type="primary">ligB</name>
    <name type="ordered locus">c4471</name>
</gene>
<reference key="1">
    <citation type="journal article" date="2002" name="Proc. Natl. Acad. Sci. U.S.A.">
        <title>Extensive mosaic structure revealed by the complete genome sequence of uropathogenic Escherichia coli.</title>
        <authorList>
            <person name="Welch R.A."/>
            <person name="Burland V."/>
            <person name="Plunkett G. III"/>
            <person name="Redford P."/>
            <person name="Roesch P."/>
            <person name="Rasko D."/>
            <person name="Buckles E.L."/>
            <person name="Liou S.-R."/>
            <person name="Boutin A."/>
            <person name="Hackett J."/>
            <person name="Stroud D."/>
            <person name="Mayhew G.F."/>
            <person name="Rose D.J."/>
            <person name="Zhou S."/>
            <person name="Schwartz D.C."/>
            <person name="Perna N.T."/>
            <person name="Mobley H.L.T."/>
            <person name="Donnenberg M.S."/>
            <person name="Blattner F.R."/>
        </authorList>
    </citation>
    <scope>NUCLEOTIDE SEQUENCE [LARGE SCALE GENOMIC DNA]</scope>
    <source>
        <strain>CFT073 / ATCC 700928 / UPEC</strain>
    </source>
</reference>
<dbReference type="EC" id="6.5.1.2" evidence="1"/>
<dbReference type="EMBL" id="AE014075">
    <property type="protein sequence ID" value="AAN82907.1"/>
    <property type="status" value="ALT_INIT"/>
    <property type="molecule type" value="Genomic_DNA"/>
</dbReference>
<dbReference type="RefSeq" id="WP_001443183.1">
    <property type="nucleotide sequence ID" value="NZ_CP051263.1"/>
</dbReference>
<dbReference type="SMR" id="Q8FC83"/>
<dbReference type="STRING" id="199310.c4471"/>
<dbReference type="DNASU" id="1038244"/>
<dbReference type="KEGG" id="ecc:c4471"/>
<dbReference type="eggNOG" id="COG0272">
    <property type="taxonomic scope" value="Bacteria"/>
</dbReference>
<dbReference type="HOGENOM" id="CLU_489786_0_0_6"/>
<dbReference type="Proteomes" id="UP000001410">
    <property type="component" value="Chromosome"/>
</dbReference>
<dbReference type="GO" id="GO:0003911">
    <property type="term" value="F:DNA ligase (NAD+) activity"/>
    <property type="evidence" value="ECO:0007669"/>
    <property type="project" value="UniProtKB-UniRule"/>
</dbReference>
<dbReference type="GO" id="GO:0006281">
    <property type="term" value="P:DNA repair"/>
    <property type="evidence" value="ECO:0007669"/>
    <property type="project" value="UniProtKB-KW"/>
</dbReference>
<dbReference type="GO" id="GO:0006260">
    <property type="term" value="P:DNA replication"/>
    <property type="evidence" value="ECO:0007669"/>
    <property type="project" value="UniProtKB-KW"/>
</dbReference>
<dbReference type="FunFam" id="1.10.287.610:FF:000003">
    <property type="entry name" value="DNA ligase B"/>
    <property type="match status" value="1"/>
</dbReference>
<dbReference type="FunFam" id="2.40.50.140:FF:000139">
    <property type="entry name" value="DNA ligase B"/>
    <property type="match status" value="1"/>
</dbReference>
<dbReference type="FunFam" id="3.30.470.30:FF:000007">
    <property type="entry name" value="DNA ligase B"/>
    <property type="match status" value="1"/>
</dbReference>
<dbReference type="Gene3D" id="3.30.470.30">
    <property type="entry name" value="DNA ligase/mRNA capping enzyme"/>
    <property type="match status" value="1"/>
</dbReference>
<dbReference type="Gene3D" id="1.10.287.610">
    <property type="entry name" value="Helix hairpin bin"/>
    <property type="match status" value="1"/>
</dbReference>
<dbReference type="Gene3D" id="2.40.50.140">
    <property type="entry name" value="Nucleic acid-binding proteins"/>
    <property type="match status" value="1"/>
</dbReference>
<dbReference type="HAMAP" id="MF_01587">
    <property type="entry name" value="DNA_ligase_B"/>
    <property type="match status" value="1"/>
</dbReference>
<dbReference type="InterPro" id="IPR018239">
    <property type="entry name" value="DNA_ligase_AS"/>
</dbReference>
<dbReference type="InterPro" id="IPR020923">
    <property type="entry name" value="DNA_ligase_B"/>
</dbReference>
<dbReference type="InterPro" id="IPR033136">
    <property type="entry name" value="DNA_ligase_CS"/>
</dbReference>
<dbReference type="InterPro" id="IPR013839">
    <property type="entry name" value="DNAligase_adenylation"/>
</dbReference>
<dbReference type="InterPro" id="IPR013840">
    <property type="entry name" value="DNAligase_N"/>
</dbReference>
<dbReference type="InterPro" id="IPR012340">
    <property type="entry name" value="NA-bd_OB-fold"/>
</dbReference>
<dbReference type="InterPro" id="IPR050326">
    <property type="entry name" value="NAD_dep_DNA_ligaseB"/>
</dbReference>
<dbReference type="InterPro" id="IPR004150">
    <property type="entry name" value="NAD_DNA_ligase_OB"/>
</dbReference>
<dbReference type="InterPro" id="IPR010994">
    <property type="entry name" value="RuvA_2-like"/>
</dbReference>
<dbReference type="NCBIfam" id="NF005987">
    <property type="entry name" value="PRK08097.1"/>
    <property type="match status" value="1"/>
</dbReference>
<dbReference type="PANTHER" id="PTHR47810">
    <property type="entry name" value="DNA LIGASE"/>
    <property type="match status" value="1"/>
</dbReference>
<dbReference type="PANTHER" id="PTHR47810:SF1">
    <property type="entry name" value="DNA LIGASE B"/>
    <property type="match status" value="1"/>
</dbReference>
<dbReference type="Pfam" id="PF01653">
    <property type="entry name" value="DNA_ligase_aden"/>
    <property type="match status" value="1"/>
</dbReference>
<dbReference type="Pfam" id="PF03120">
    <property type="entry name" value="DNA_ligase_OB"/>
    <property type="match status" value="1"/>
</dbReference>
<dbReference type="SMART" id="SM00532">
    <property type="entry name" value="LIGANc"/>
    <property type="match status" value="1"/>
</dbReference>
<dbReference type="SUPFAM" id="SSF56091">
    <property type="entry name" value="DNA ligase/mRNA capping enzyme, catalytic domain"/>
    <property type="match status" value="1"/>
</dbReference>
<dbReference type="SUPFAM" id="SSF50249">
    <property type="entry name" value="Nucleic acid-binding proteins"/>
    <property type="match status" value="1"/>
</dbReference>
<dbReference type="SUPFAM" id="SSF47781">
    <property type="entry name" value="RuvA domain 2-like"/>
    <property type="match status" value="1"/>
</dbReference>
<dbReference type="PROSITE" id="PS01055">
    <property type="entry name" value="DNA_LIGASE_N1"/>
    <property type="match status" value="1"/>
</dbReference>
<dbReference type="PROSITE" id="PS01056">
    <property type="entry name" value="DNA_LIGASE_N2"/>
    <property type="match status" value="1"/>
</dbReference>
<accession>Q8FC83</accession>
<feature type="chain" id="PRO_0000313540" description="DNA ligase B">
    <location>
        <begin position="1"/>
        <end position="560"/>
    </location>
</feature>
<feature type="active site" description="N6-AMP-lysine intermediate" evidence="1">
    <location>
        <position position="124"/>
    </location>
</feature>
<name>LIGB_ECOL6</name>
<keyword id="KW-0227">DNA damage</keyword>
<keyword id="KW-0234">DNA repair</keyword>
<keyword id="KW-0235">DNA replication</keyword>
<keyword id="KW-0436">Ligase</keyword>
<keyword id="KW-0520">NAD</keyword>
<keyword id="KW-1185">Reference proteome</keyword>
<protein>
    <recommendedName>
        <fullName evidence="1">DNA ligase B</fullName>
        <ecNumber evidence="1">6.5.1.2</ecNumber>
    </recommendedName>
    <alternativeName>
        <fullName evidence="1">Polydeoxyribonucleotide synthase [NAD(+)] B</fullName>
    </alternativeName>
</protein>
<comment type="function">
    <text evidence="1">Catalyzes the formation of phosphodiester linkages between 5'-phosphoryl and 3'-hydroxyl groups in double-stranded DNA using NAD as a coenzyme and as the energy source for the reaction.</text>
</comment>
<comment type="catalytic activity">
    <reaction evidence="1">
        <text>NAD(+) + (deoxyribonucleotide)n-3'-hydroxyl + 5'-phospho-(deoxyribonucleotide)m = (deoxyribonucleotide)n+m + AMP + beta-nicotinamide D-nucleotide.</text>
        <dbReference type="EC" id="6.5.1.2"/>
    </reaction>
</comment>
<comment type="similarity">
    <text evidence="1">Belongs to the NAD-dependent DNA ligase family. LigB subfamily.</text>
</comment>
<comment type="sequence caution" evidence="2">
    <conflict type="erroneous initiation">
        <sequence resource="EMBL-CDS" id="AAN82907"/>
    </conflict>
</comment>
<organism>
    <name type="scientific">Escherichia coli O6:H1 (strain CFT073 / ATCC 700928 / UPEC)</name>
    <dbReference type="NCBI Taxonomy" id="199310"/>
    <lineage>
        <taxon>Bacteria</taxon>
        <taxon>Pseudomonadati</taxon>
        <taxon>Pseudomonadota</taxon>
        <taxon>Gammaproteobacteria</taxon>
        <taxon>Enterobacterales</taxon>
        <taxon>Enterobacteriaceae</taxon>
        <taxon>Escherichia</taxon>
    </lineage>
</organism>